<organism>
    <name type="scientific">Xanthomonas campestris pv. campestris (strain ATCC 33913 / DSM 3586 / NCPPB 528 / LMG 568 / P 25)</name>
    <dbReference type="NCBI Taxonomy" id="190485"/>
    <lineage>
        <taxon>Bacteria</taxon>
        <taxon>Pseudomonadati</taxon>
        <taxon>Pseudomonadota</taxon>
        <taxon>Gammaproteobacteria</taxon>
        <taxon>Lysobacterales</taxon>
        <taxon>Lysobacteraceae</taxon>
        <taxon>Xanthomonas</taxon>
    </lineage>
</organism>
<keyword id="KW-0067">ATP-binding</keyword>
<keyword id="KW-0997">Cell inner membrane</keyword>
<keyword id="KW-1003">Cell membrane</keyword>
<keyword id="KW-0418">Kinase</keyword>
<keyword id="KW-0448">Lipopolysaccharide biosynthesis</keyword>
<keyword id="KW-0472">Membrane</keyword>
<keyword id="KW-0547">Nucleotide-binding</keyword>
<keyword id="KW-1185">Reference proteome</keyword>
<keyword id="KW-0808">Transferase</keyword>
<accession>Q8PBX3</accession>
<reference key="1">
    <citation type="journal article" date="2002" name="Nature">
        <title>Comparison of the genomes of two Xanthomonas pathogens with differing host specificities.</title>
        <authorList>
            <person name="da Silva A.C.R."/>
            <person name="Ferro J.A."/>
            <person name="Reinach F.C."/>
            <person name="Farah C.S."/>
            <person name="Furlan L.R."/>
            <person name="Quaggio R.B."/>
            <person name="Monteiro-Vitorello C.B."/>
            <person name="Van Sluys M.A."/>
            <person name="Almeida N.F. Jr."/>
            <person name="Alves L.M.C."/>
            <person name="do Amaral A.M."/>
            <person name="Bertolini M.C."/>
            <person name="Camargo L.E.A."/>
            <person name="Camarotte G."/>
            <person name="Cannavan F."/>
            <person name="Cardozo J."/>
            <person name="Chambergo F."/>
            <person name="Ciapina L.P."/>
            <person name="Cicarelli R.M.B."/>
            <person name="Coutinho L.L."/>
            <person name="Cursino-Santos J.R."/>
            <person name="El-Dorry H."/>
            <person name="Faria J.B."/>
            <person name="Ferreira A.J.S."/>
            <person name="Ferreira R.C.C."/>
            <person name="Ferro M.I.T."/>
            <person name="Formighieri E.F."/>
            <person name="Franco M.C."/>
            <person name="Greggio C.C."/>
            <person name="Gruber A."/>
            <person name="Katsuyama A.M."/>
            <person name="Kishi L.T."/>
            <person name="Leite R.P."/>
            <person name="Lemos E.G.M."/>
            <person name="Lemos M.V.F."/>
            <person name="Locali E.C."/>
            <person name="Machado M.A."/>
            <person name="Madeira A.M.B.N."/>
            <person name="Martinez-Rossi N.M."/>
            <person name="Martins E.C."/>
            <person name="Meidanis J."/>
            <person name="Menck C.F.M."/>
            <person name="Miyaki C.Y."/>
            <person name="Moon D.H."/>
            <person name="Moreira L.M."/>
            <person name="Novo M.T.M."/>
            <person name="Okura V.K."/>
            <person name="Oliveira M.C."/>
            <person name="Oliveira V.R."/>
            <person name="Pereira H.A."/>
            <person name="Rossi A."/>
            <person name="Sena J.A.D."/>
            <person name="Silva C."/>
            <person name="de Souza R.F."/>
            <person name="Spinola L.A.F."/>
            <person name="Takita M.A."/>
            <person name="Tamura R.E."/>
            <person name="Teixeira E.C."/>
            <person name="Tezza R.I.D."/>
            <person name="Trindade dos Santos M."/>
            <person name="Truffi D."/>
            <person name="Tsai S.M."/>
            <person name="White F.F."/>
            <person name="Setubal J.C."/>
            <person name="Kitajima J.P."/>
        </authorList>
    </citation>
    <scope>NUCLEOTIDE SEQUENCE [LARGE SCALE GENOMIC DNA]</scope>
    <source>
        <strain>ATCC 33913 / DSM 3586 / NCPPB 528 / LMG 568 / P 25</strain>
    </source>
</reference>
<proteinExistence type="inferred from homology"/>
<name>KDKA_XANCP</name>
<evidence type="ECO:0000255" key="1">
    <source>
        <dbReference type="HAMAP-Rule" id="MF_00521"/>
    </source>
</evidence>
<protein>
    <recommendedName>
        <fullName evidence="1">3-deoxy-D-manno-octulosonic acid kinase</fullName>
        <shortName evidence="1">Kdo kinase</shortName>
        <ecNumber evidence="1">2.7.1.166</ecNumber>
    </recommendedName>
</protein>
<dbReference type="EC" id="2.7.1.166" evidence="1"/>
<dbReference type="EMBL" id="AE008922">
    <property type="protein sequence ID" value="AAM40294.1"/>
    <property type="molecule type" value="Genomic_DNA"/>
</dbReference>
<dbReference type="RefSeq" id="NP_636370.1">
    <property type="nucleotide sequence ID" value="NC_003902.1"/>
</dbReference>
<dbReference type="RefSeq" id="WP_011036197.1">
    <property type="nucleotide sequence ID" value="NC_003902.1"/>
</dbReference>
<dbReference type="SMR" id="Q8PBX3"/>
<dbReference type="STRING" id="190485.XCC0993"/>
<dbReference type="DNASU" id="1001509"/>
<dbReference type="EnsemblBacteria" id="AAM40294">
    <property type="protein sequence ID" value="AAM40294"/>
    <property type="gene ID" value="XCC0993"/>
</dbReference>
<dbReference type="KEGG" id="xcc:XCC0993"/>
<dbReference type="PATRIC" id="fig|190485.4.peg.1058"/>
<dbReference type="eggNOG" id="COG3642">
    <property type="taxonomic scope" value="Bacteria"/>
</dbReference>
<dbReference type="HOGENOM" id="CLU_094226_0_0_6"/>
<dbReference type="OrthoDB" id="6854449at2"/>
<dbReference type="UniPathway" id="UPA00958"/>
<dbReference type="Proteomes" id="UP000001010">
    <property type="component" value="Chromosome"/>
</dbReference>
<dbReference type="GO" id="GO:0005886">
    <property type="term" value="C:plasma membrane"/>
    <property type="evidence" value="ECO:0007669"/>
    <property type="project" value="UniProtKB-SubCell"/>
</dbReference>
<dbReference type="GO" id="GO:0005524">
    <property type="term" value="F:ATP binding"/>
    <property type="evidence" value="ECO:0007669"/>
    <property type="project" value="UniProtKB-UniRule"/>
</dbReference>
<dbReference type="GO" id="GO:0016301">
    <property type="term" value="F:kinase activity"/>
    <property type="evidence" value="ECO:0007669"/>
    <property type="project" value="UniProtKB-KW"/>
</dbReference>
<dbReference type="GO" id="GO:0016773">
    <property type="term" value="F:phosphotransferase activity, alcohol group as acceptor"/>
    <property type="evidence" value="ECO:0007669"/>
    <property type="project" value="UniProtKB-UniRule"/>
</dbReference>
<dbReference type="GO" id="GO:0009244">
    <property type="term" value="P:lipopolysaccharide core region biosynthetic process"/>
    <property type="evidence" value="ECO:0007669"/>
    <property type="project" value="UniProtKB-UniRule"/>
</dbReference>
<dbReference type="Gene3D" id="1.10.510.10">
    <property type="entry name" value="Transferase(Phosphotransferase) domain 1"/>
    <property type="match status" value="1"/>
</dbReference>
<dbReference type="HAMAP" id="MF_00521">
    <property type="entry name" value="KDO_kinase"/>
    <property type="match status" value="1"/>
</dbReference>
<dbReference type="InterPro" id="IPR022826">
    <property type="entry name" value="KDO_kinase"/>
</dbReference>
<dbReference type="InterPro" id="IPR011009">
    <property type="entry name" value="Kinase-like_dom_sf"/>
</dbReference>
<dbReference type="NCBIfam" id="NF002475">
    <property type="entry name" value="PRK01723.1"/>
    <property type="match status" value="1"/>
</dbReference>
<dbReference type="Pfam" id="PF06293">
    <property type="entry name" value="Kdo"/>
    <property type="match status" value="1"/>
</dbReference>
<dbReference type="SUPFAM" id="SSF56112">
    <property type="entry name" value="Protein kinase-like (PK-like)"/>
    <property type="match status" value="1"/>
</dbReference>
<comment type="function">
    <text evidence="1">Catalyzes the ATP-dependent phosphorylation of the 3-deoxy-D-manno-octulosonic acid (Kdo) residue in Kdo-lipid IV(A) at the 4-OH position.</text>
</comment>
<comment type="catalytic activity">
    <reaction evidence="1">
        <text>an alpha-Kdo-(2-&gt;6)-lipid IVA + ATP = a 4-O-phospho-alpha-Kdo-(2-&gt;6)-lipid IVA + ADP + H(+)</text>
        <dbReference type="Rhea" id="RHEA:74271"/>
        <dbReference type="ChEBI" id="CHEBI:15378"/>
        <dbReference type="ChEBI" id="CHEBI:30616"/>
        <dbReference type="ChEBI" id="CHEBI:176428"/>
        <dbReference type="ChEBI" id="CHEBI:193140"/>
        <dbReference type="ChEBI" id="CHEBI:456216"/>
        <dbReference type="EC" id="2.7.1.166"/>
    </reaction>
</comment>
<comment type="pathway">
    <text evidence="1">Bacterial outer membrane biogenesis; LPS core biosynthesis.</text>
</comment>
<comment type="subcellular location">
    <subcellularLocation>
        <location evidence="1">Cell inner membrane</location>
        <topology evidence="1">Peripheral membrane protein</topology>
        <orientation evidence="1">Cytoplasmic side</orientation>
    </subcellularLocation>
</comment>
<comment type="similarity">
    <text evidence="1">Belongs to the protein kinase superfamily. KdkA/RfaP family.</text>
</comment>
<sequence>MVSFDATEALTPYREGRGYGAILFDRERLRQADAGLFSPQRWGDRARPVDEGGRGGAWFVDAPFGHSVLRQYRRGGMAARVSRDQYLWKGAGRTRSFAEFRLMRELLKRKLPVPRPLAACYLREGLGYRAALLMERLENVRSLADHAQVAGRGAPWEDTGRLIARFHRAGLDHADLNAHNILFDAGGHGWLIDFDRGVLRIPATRWRERNLARLHRSLLKLRGNRTREDVDKDYERLHRAYELAWGRGY</sequence>
<feature type="chain" id="PRO_0000194321" description="3-deoxy-D-manno-octulosonic acid kinase">
    <location>
        <begin position="1"/>
        <end position="249"/>
    </location>
</feature>
<feature type="active site" evidence="1">
    <location>
        <position position="175"/>
    </location>
</feature>
<gene>
    <name evidence="1" type="primary">kdkA</name>
    <name type="ordered locus">XCC0993</name>
</gene>